<evidence type="ECO:0000255" key="1">
    <source>
        <dbReference type="HAMAP-Rule" id="MF_00601"/>
    </source>
</evidence>
<proteinExistence type="inferred from homology"/>
<keyword id="KW-1283">Bacterial microcompartment</keyword>
<keyword id="KW-0846">Cobalamin</keyword>
<keyword id="KW-0170">Cobalt</keyword>
<keyword id="KW-0456">Lyase</keyword>
<feature type="chain" id="PRO_1000147054" description="Ethanolamine ammonia-lyase small subunit">
    <location>
        <begin position="1"/>
        <end position="293"/>
    </location>
</feature>
<feature type="binding site" evidence="1">
    <location>
        <position position="207"/>
    </location>
    <ligand>
        <name>adenosylcob(III)alamin</name>
        <dbReference type="ChEBI" id="CHEBI:18408"/>
    </ligand>
</feature>
<feature type="binding site" evidence="1">
    <location>
        <position position="228"/>
    </location>
    <ligand>
        <name>adenosylcob(III)alamin</name>
        <dbReference type="ChEBI" id="CHEBI:18408"/>
    </ligand>
</feature>
<reference key="1">
    <citation type="journal article" date="2011" name="J. Bacteriol.">
        <title>Genome sequence of lineage III Listeria monocytogenes strain HCC23.</title>
        <authorList>
            <person name="Steele C.L."/>
            <person name="Donaldson J.R."/>
            <person name="Paul D."/>
            <person name="Banes M.M."/>
            <person name="Arick T."/>
            <person name="Bridges S.M."/>
            <person name="Lawrence M.L."/>
        </authorList>
    </citation>
    <scope>NUCLEOTIDE SEQUENCE [LARGE SCALE GENOMIC DNA]</scope>
    <source>
        <strain>HCC23</strain>
    </source>
</reference>
<accession>B8DC56</accession>
<sequence>MNEQELKQMIEGILTEMSGGKTTDTVAAAPTKSVVETVVTEGSIPDITEVDIKKQLLVPEPADREGYLKMKQMTPARLGLWRAGPRYKTETILRFRADHAVAQDSVFSYVSEDLVKEMNFIPVNTKCQDKDEYLTRPDLGREFDNEMVEVIRANTTKNAKLQIVVGDGLSSAAIEANIKDILPSIKQGLKMYNLDFDNIIFVKHCRVPSMDQIGEITGADVVCLLVGERPGLVTAESMSAYIAYKPTIGMPEARRTVISNIHSGGTPPVEAGAYIAELIHNMLEKKCSGIDLK</sequence>
<comment type="function">
    <text evidence="1">Catalyzes the deamination of various vicinal amino-alcohols to oxo compounds. Allows this organism to utilize ethanolamine as the sole source of nitrogen and carbon in the presence of external vitamin B12.</text>
</comment>
<comment type="catalytic activity">
    <reaction evidence="1">
        <text>ethanolamine = acetaldehyde + NH4(+)</text>
        <dbReference type="Rhea" id="RHEA:15313"/>
        <dbReference type="ChEBI" id="CHEBI:15343"/>
        <dbReference type="ChEBI" id="CHEBI:28938"/>
        <dbReference type="ChEBI" id="CHEBI:57603"/>
        <dbReference type="EC" id="4.3.1.7"/>
    </reaction>
</comment>
<comment type="cofactor">
    <cofactor evidence="1">
        <name>adenosylcob(III)alamin</name>
        <dbReference type="ChEBI" id="CHEBI:18408"/>
    </cofactor>
    <text evidence="1">Binds between the large and small subunits.</text>
</comment>
<comment type="pathway">
    <text evidence="1">Amine and polyamine degradation; ethanolamine degradation.</text>
</comment>
<comment type="subunit">
    <text evidence="1">The basic unit is a heterodimer which dimerizes to form tetramers. The heterotetramers trimerize; 6 large subunits form a core ring with 6 small subunits projecting outwards.</text>
</comment>
<comment type="subcellular location">
    <subcellularLocation>
        <location evidence="1">Bacterial microcompartment</location>
    </subcellularLocation>
</comment>
<comment type="similarity">
    <text evidence="1">Belongs to the EutC family.</text>
</comment>
<protein>
    <recommendedName>
        <fullName evidence="1">Ethanolamine ammonia-lyase small subunit</fullName>
        <shortName evidence="1">EAL small subunit</shortName>
        <ecNumber evidence="1">4.3.1.7</ecNumber>
    </recommendedName>
</protein>
<dbReference type="EC" id="4.3.1.7" evidence="1"/>
<dbReference type="EMBL" id="CP001175">
    <property type="protein sequence ID" value="ACK39819.1"/>
    <property type="molecule type" value="Genomic_DNA"/>
</dbReference>
<dbReference type="RefSeq" id="WP_012581526.1">
    <property type="nucleotide sequence ID" value="NC_011660.1"/>
</dbReference>
<dbReference type="SMR" id="B8DC56"/>
<dbReference type="KEGG" id="lmh:LMHCC_1474"/>
<dbReference type="HOGENOM" id="CLU_068224_0_0_9"/>
<dbReference type="UniPathway" id="UPA00560"/>
<dbReference type="GO" id="GO:0009350">
    <property type="term" value="C:ethanolamine ammonia-lyase complex"/>
    <property type="evidence" value="ECO:0007669"/>
    <property type="project" value="UniProtKB-UniRule"/>
</dbReference>
<dbReference type="GO" id="GO:0031471">
    <property type="term" value="C:ethanolamine degradation polyhedral organelle"/>
    <property type="evidence" value="ECO:0007669"/>
    <property type="project" value="UniProtKB-UniRule"/>
</dbReference>
<dbReference type="GO" id="GO:0031419">
    <property type="term" value="F:cobalamin binding"/>
    <property type="evidence" value="ECO:0007669"/>
    <property type="project" value="UniProtKB-UniRule"/>
</dbReference>
<dbReference type="GO" id="GO:0008851">
    <property type="term" value="F:ethanolamine ammonia-lyase activity"/>
    <property type="evidence" value="ECO:0007669"/>
    <property type="project" value="UniProtKB-UniRule"/>
</dbReference>
<dbReference type="GO" id="GO:0006520">
    <property type="term" value="P:amino acid metabolic process"/>
    <property type="evidence" value="ECO:0007669"/>
    <property type="project" value="InterPro"/>
</dbReference>
<dbReference type="GO" id="GO:0046336">
    <property type="term" value="P:ethanolamine catabolic process"/>
    <property type="evidence" value="ECO:0007669"/>
    <property type="project" value="UniProtKB-UniRule"/>
</dbReference>
<dbReference type="FunFam" id="1.10.30.40:FF:000001">
    <property type="entry name" value="Ethanolamine ammonia-lyase light chain"/>
    <property type="match status" value="1"/>
</dbReference>
<dbReference type="FunFam" id="3.40.50.11240:FF:000001">
    <property type="entry name" value="Ethanolamine ammonia-lyase light chain"/>
    <property type="match status" value="1"/>
</dbReference>
<dbReference type="Gene3D" id="3.40.50.11240">
    <property type="entry name" value="Ethanolamine ammonia-lyase light chain (EutC)"/>
    <property type="match status" value="1"/>
</dbReference>
<dbReference type="Gene3D" id="1.10.30.40">
    <property type="entry name" value="Ethanolamine ammonia-lyase light chain (EutC), N-terminal domain"/>
    <property type="match status" value="1"/>
</dbReference>
<dbReference type="HAMAP" id="MF_00601">
    <property type="entry name" value="EutC"/>
    <property type="match status" value="1"/>
</dbReference>
<dbReference type="InterPro" id="IPR009246">
    <property type="entry name" value="EutC"/>
</dbReference>
<dbReference type="InterPro" id="IPR042251">
    <property type="entry name" value="EutC_C"/>
</dbReference>
<dbReference type="InterPro" id="IPR042255">
    <property type="entry name" value="EutC_N"/>
</dbReference>
<dbReference type="NCBIfam" id="NF003971">
    <property type="entry name" value="PRK05465.1"/>
    <property type="match status" value="1"/>
</dbReference>
<dbReference type="PANTHER" id="PTHR39330">
    <property type="entry name" value="ETHANOLAMINE AMMONIA-LYASE LIGHT CHAIN"/>
    <property type="match status" value="1"/>
</dbReference>
<dbReference type="PANTHER" id="PTHR39330:SF1">
    <property type="entry name" value="ETHANOLAMINE AMMONIA-LYASE SMALL SUBUNIT"/>
    <property type="match status" value="1"/>
</dbReference>
<dbReference type="Pfam" id="PF05985">
    <property type="entry name" value="EutC"/>
    <property type="match status" value="1"/>
</dbReference>
<dbReference type="PIRSF" id="PIRSF018982">
    <property type="entry name" value="EutC"/>
    <property type="match status" value="1"/>
</dbReference>
<name>EUTC_LISMH</name>
<gene>
    <name evidence="1" type="primary">eutC</name>
    <name type="ordered locus">LMHCC_1474</name>
</gene>
<organism>
    <name type="scientific">Listeria monocytogenes serotype 4a (strain HCC23)</name>
    <dbReference type="NCBI Taxonomy" id="552536"/>
    <lineage>
        <taxon>Bacteria</taxon>
        <taxon>Bacillati</taxon>
        <taxon>Bacillota</taxon>
        <taxon>Bacilli</taxon>
        <taxon>Bacillales</taxon>
        <taxon>Listeriaceae</taxon>
        <taxon>Listeria</taxon>
    </lineage>
</organism>